<evidence type="ECO:0000255" key="1">
    <source>
        <dbReference type="HAMAP-Rule" id="MF_00052"/>
    </source>
</evidence>
<evidence type="ECO:0000255" key="2">
    <source>
        <dbReference type="PROSITE-ProRule" id="PRU01319"/>
    </source>
</evidence>
<feature type="chain" id="PRO_0000111587" description="Ribonuclease HII">
    <location>
        <begin position="1"/>
        <end position="261"/>
    </location>
</feature>
<feature type="domain" description="RNase H type-2" evidence="2">
    <location>
        <begin position="71"/>
        <end position="259"/>
    </location>
</feature>
<feature type="binding site" evidence="1">
    <location>
        <position position="77"/>
    </location>
    <ligand>
        <name>a divalent metal cation</name>
        <dbReference type="ChEBI" id="CHEBI:60240"/>
    </ligand>
</feature>
<feature type="binding site" evidence="1">
    <location>
        <position position="78"/>
    </location>
    <ligand>
        <name>a divalent metal cation</name>
        <dbReference type="ChEBI" id="CHEBI:60240"/>
    </ligand>
</feature>
<feature type="binding site" evidence="1">
    <location>
        <position position="169"/>
    </location>
    <ligand>
        <name>a divalent metal cation</name>
        <dbReference type="ChEBI" id="CHEBI:60240"/>
    </ligand>
</feature>
<dbReference type="EC" id="3.1.26.4" evidence="1"/>
<dbReference type="EMBL" id="AE017262">
    <property type="protein sequence ID" value="AAT04066.1"/>
    <property type="molecule type" value="Genomic_DNA"/>
</dbReference>
<dbReference type="RefSeq" id="WP_003727519.1">
    <property type="nucleotide sequence ID" value="NC_002973.6"/>
</dbReference>
<dbReference type="SMR" id="Q720E8"/>
<dbReference type="KEGG" id="lmf:LMOf2365_1291"/>
<dbReference type="HOGENOM" id="CLU_036532_2_1_9"/>
<dbReference type="GO" id="GO:0005737">
    <property type="term" value="C:cytoplasm"/>
    <property type="evidence" value="ECO:0007669"/>
    <property type="project" value="UniProtKB-SubCell"/>
</dbReference>
<dbReference type="GO" id="GO:0032299">
    <property type="term" value="C:ribonuclease H2 complex"/>
    <property type="evidence" value="ECO:0007669"/>
    <property type="project" value="TreeGrafter"/>
</dbReference>
<dbReference type="GO" id="GO:0030145">
    <property type="term" value="F:manganese ion binding"/>
    <property type="evidence" value="ECO:0007669"/>
    <property type="project" value="UniProtKB-UniRule"/>
</dbReference>
<dbReference type="GO" id="GO:0003723">
    <property type="term" value="F:RNA binding"/>
    <property type="evidence" value="ECO:0007669"/>
    <property type="project" value="InterPro"/>
</dbReference>
<dbReference type="GO" id="GO:0004523">
    <property type="term" value="F:RNA-DNA hybrid ribonuclease activity"/>
    <property type="evidence" value="ECO:0007669"/>
    <property type="project" value="UniProtKB-UniRule"/>
</dbReference>
<dbReference type="GO" id="GO:0043137">
    <property type="term" value="P:DNA replication, removal of RNA primer"/>
    <property type="evidence" value="ECO:0007669"/>
    <property type="project" value="TreeGrafter"/>
</dbReference>
<dbReference type="GO" id="GO:0006298">
    <property type="term" value="P:mismatch repair"/>
    <property type="evidence" value="ECO:0007669"/>
    <property type="project" value="TreeGrafter"/>
</dbReference>
<dbReference type="CDD" id="cd07182">
    <property type="entry name" value="RNase_HII_bacteria_HII_like"/>
    <property type="match status" value="1"/>
</dbReference>
<dbReference type="FunFam" id="3.30.420.10:FF:000006">
    <property type="entry name" value="Ribonuclease HII"/>
    <property type="match status" value="1"/>
</dbReference>
<dbReference type="Gene3D" id="3.30.420.10">
    <property type="entry name" value="Ribonuclease H-like superfamily/Ribonuclease H"/>
    <property type="match status" value="1"/>
</dbReference>
<dbReference type="HAMAP" id="MF_00052_B">
    <property type="entry name" value="RNase_HII_B"/>
    <property type="match status" value="1"/>
</dbReference>
<dbReference type="InterPro" id="IPR022898">
    <property type="entry name" value="RNase_HII"/>
</dbReference>
<dbReference type="InterPro" id="IPR001352">
    <property type="entry name" value="RNase_HII/HIII"/>
</dbReference>
<dbReference type="InterPro" id="IPR024567">
    <property type="entry name" value="RNase_HII/HIII_dom"/>
</dbReference>
<dbReference type="InterPro" id="IPR012337">
    <property type="entry name" value="RNaseH-like_sf"/>
</dbReference>
<dbReference type="InterPro" id="IPR036397">
    <property type="entry name" value="RNaseH_sf"/>
</dbReference>
<dbReference type="NCBIfam" id="NF000594">
    <property type="entry name" value="PRK00015.1-1"/>
    <property type="match status" value="1"/>
</dbReference>
<dbReference type="NCBIfam" id="NF000595">
    <property type="entry name" value="PRK00015.1-3"/>
    <property type="match status" value="1"/>
</dbReference>
<dbReference type="PANTHER" id="PTHR10954">
    <property type="entry name" value="RIBONUCLEASE H2 SUBUNIT A"/>
    <property type="match status" value="1"/>
</dbReference>
<dbReference type="PANTHER" id="PTHR10954:SF18">
    <property type="entry name" value="RIBONUCLEASE HII"/>
    <property type="match status" value="1"/>
</dbReference>
<dbReference type="Pfam" id="PF01351">
    <property type="entry name" value="RNase_HII"/>
    <property type="match status" value="1"/>
</dbReference>
<dbReference type="SUPFAM" id="SSF53098">
    <property type="entry name" value="Ribonuclease H-like"/>
    <property type="match status" value="1"/>
</dbReference>
<dbReference type="PROSITE" id="PS51975">
    <property type="entry name" value="RNASE_H_2"/>
    <property type="match status" value="1"/>
</dbReference>
<accession>Q720E8</accession>
<name>RNH2_LISMF</name>
<reference key="1">
    <citation type="journal article" date="2004" name="Nucleic Acids Res.">
        <title>Whole genome comparisons of serotype 4b and 1/2a strains of the food-borne pathogen Listeria monocytogenes reveal new insights into the core genome components of this species.</title>
        <authorList>
            <person name="Nelson K.E."/>
            <person name="Fouts D.E."/>
            <person name="Mongodin E.F."/>
            <person name="Ravel J."/>
            <person name="DeBoy R.T."/>
            <person name="Kolonay J.F."/>
            <person name="Rasko D.A."/>
            <person name="Angiuoli S.V."/>
            <person name="Gill S.R."/>
            <person name="Paulsen I.T."/>
            <person name="Peterson J.D."/>
            <person name="White O."/>
            <person name="Nelson W.C."/>
            <person name="Nierman W.C."/>
            <person name="Beanan M.J."/>
            <person name="Brinkac L.M."/>
            <person name="Daugherty S.C."/>
            <person name="Dodson R.J."/>
            <person name="Durkin A.S."/>
            <person name="Madupu R."/>
            <person name="Haft D.H."/>
            <person name="Selengut J."/>
            <person name="Van Aken S.E."/>
            <person name="Khouri H.M."/>
            <person name="Fedorova N."/>
            <person name="Forberger H.A."/>
            <person name="Tran B."/>
            <person name="Kathariou S."/>
            <person name="Wonderling L.D."/>
            <person name="Uhlich G.A."/>
            <person name="Bayles D.O."/>
            <person name="Luchansky J.B."/>
            <person name="Fraser C.M."/>
        </authorList>
    </citation>
    <scope>NUCLEOTIDE SEQUENCE [LARGE SCALE GENOMIC DNA]</scope>
    <source>
        <strain>F2365</strain>
    </source>
</reference>
<gene>
    <name evidence="1" type="primary">rnhB</name>
    <name type="ordered locus">LMOf2365_1291</name>
</gene>
<proteinExistence type="inferred from homology"/>
<protein>
    <recommendedName>
        <fullName evidence="1">Ribonuclease HII</fullName>
        <shortName evidence="1">RNase HII</shortName>
        <ecNumber evidence="1">3.1.26.4</ecNumber>
    </recommendedName>
</protein>
<organism>
    <name type="scientific">Listeria monocytogenes serotype 4b (strain F2365)</name>
    <dbReference type="NCBI Taxonomy" id="265669"/>
    <lineage>
        <taxon>Bacteria</taxon>
        <taxon>Bacillati</taxon>
        <taxon>Bacillota</taxon>
        <taxon>Bacilli</taxon>
        <taxon>Bacillales</taxon>
        <taxon>Listeriaceae</taxon>
        <taxon>Listeria</taxon>
    </lineage>
</organism>
<keyword id="KW-0963">Cytoplasm</keyword>
<keyword id="KW-0255">Endonuclease</keyword>
<keyword id="KW-0378">Hydrolase</keyword>
<keyword id="KW-0464">Manganese</keyword>
<keyword id="KW-0479">Metal-binding</keyword>
<keyword id="KW-0540">Nuclease</keyword>
<sequence length="261" mass="29396">MSDSISVIREKLNQVTSEHDPFFRKCMQDERKGVEKLLETTRRKWEKEAQLRNKLEEMKQYETDLFQQGYKYIAGVDEVGRGPLAGPVVAAAVILPADFSVVGINDSKQLSEAKRDALFETIKKEAIAIGVGIIEHDVIDQVNIYEATKLAMREALDQLTPEPDFVLIDAMPLRYTEAELSLIKGDTKSISIAAASIIAKVTRDRLMQMYDEKYPGYDFANNMGYGTKKHLLGLDTIGICPIHRISFAPVKEAKLHFDSLK</sequence>
<comment type="function">
    <text evidence="1">Endonuclease that specifically degrades the RNA of RNA-DNA hybrids.</text>
</comment>
<comment type="catalytic activity">
    <reaction evidence="1">
        <text>Endonucleolytic cleavage to 5'-phosphomonoester.</text>
        <dbReference type="EC" id="3.1.26.4"/>
    </reaction>
</comment>
<comment type="cofactor">
    <cofactor evidence="1">
        <name>Mn(2+)</name>
        <dbReference type="ChEBI" id="CHEBI:29035"/>
    </cofactor>
    <cofactor evidence="1">
        <name>Mg(2+)</name>
        <dbReference type="ChEBI" id="CHEBI:18420"/>
    </cofactor>
    <text evidence="1">Manganese or magnesium. Binds 1 divalent metal ion per monomer in the absence of substrate. May bind a second metal ion after substrate binding.</text>
</comment>
<comment type="subcellular location">
    <subcellularLocation>
        <location evidence="1">Cytoplasm</location>
    </subcellularLocation>
</comment>
<comment type="similarity">
    <text evidence="1">Belongs to the RNase HII family.</text>
</comment>